<name>CATA_STAEP</name>
<reference key="1">
    <citation type="submission" date="2005-11" db="EMBL/GenBank/DDBJ databases">
        <authorList>
            <person name="Calderon I.L."/>
            <person name="Arenas F.A."/>
            <person name="Pichuantes S.E."/>
            <person name="Vasquez C.C."/>
        </authorList>
    </citation>
    <scope>NUCLEOTIDE SEQUENCE [GENOMIC DNA]</scope>
    <source>
        <strain>CH</strain>
    </source>
</reference>
<protein>
    <recommendedName>
        <fullName>Catalase</fullName>
        <ecNumber>1.11.1.6</ecNumber>
    </recommendedName>
</protein>
<gene>
    <name type="primary">katA</name>
</gene>
<dbReference type="EC" id="1.11.1.6"/>
<dbReference type="EMBL" id="DQ301862">
    <property type="protein sequence ID" value="ABC17637.1"/>
    <property type="molecule type" value="Genomic_DNA"/>
</dbReference>
<dbReference type="SMR" id="Q2PUJ9"/>
<dbReference type="GO" id="GO:0005737">
    <property type="term" value="C:cytoplasm"/>
    <property type="evidence" value="ECO:0007669"/>
    <property type="project" value="TreeGrafter"/>
</dbReference>
<dbReference type="GO" id="GO:0004096">
    <property type="term" value="F:catalase activity"/>
    <property type="evidence" value="ECO:0007669"/>
    <property type="project" value="UniProtKB-EC"/>
</dbReference>
<dbReference type="GO" id="GO:0020037">
    <property type="term" value="F:heme binding"/>
    <property type="evidence" value="ECO:0007669"/>
    <property type="project" value="InterPro"/>
</dbReference>
<dbReference type="GO" id="GO:0046872">
    <property type="term" value="F:metal ion binding"/>
    <property type="evidence" value="ECO:0007669"/>
    <property type="project" value="UniProtKB-KW"/>
</dbReference>
<dbReference type="GO" id="GO:0042744">
    <property type="term" value="P:hydrogen peroxide catabolic process"/>
    <property type="evidence" value="ECO:0007669"/>
    <property type="project" value="UniProtKB-KW"/>
</dbReference>
<dbReference type="GO" id="GO:0042542">
    <property type="term" value="P:response to hydrogen peroxide"/>
    <property type="evidence" value="ECO:0007669"/>
    <property type="project" value="TreeGrafter"/>
</dbReference>
<dbReference type="CDD" id="cd08156">
    <property type="entry name" value="catalase_clade_3"/>
    <property type="match status" value="1"/>
</dbReference>
<dbReference type="FunFam" id="2.40.180.10:FF:000001">
    <property type="entry name" value="Catalase"/>
    <property type="match status" value="1"/>
</dbReference>
<dbReference type="Gene3D" id="2.40.180.10">
    <property type="entry name" value="Catalase core domain"/>
    <property type="match status" value="1"/>
</dbReference>
<dbReference type="InterPro" id="IPR018028">
    <property type="entry name" value="Catalase"/>
</dbReference>
<dbReference type="InterPro" id="IPR040333">
    <property type="entry name" value="Catalase_3"/>
</dbReference>
<dbReference type="InterPro" id="IPR024708">
    <property type="entry name" value="Catalase_AS"/>
</dbReference>
<dbReference type="InterPro" id="IPR024711">
    <property type="entry name" value="Catalase_clade1/3"/>
</dbReference>
<dbReference type="InterPro" id="IPR011614">
    <property type="entry name" value="Catalase_core"/>
</dbReference>
<dbReference type="InterPro" id="IPR002226">
    <property type="entry name" value="Catalase_haem_BS"/>
</dbReference>
<dbReference type="InterPro" id="IPR010582">
    <property type="entry name" value="Catalase_immune_responsive"/>
</dbReference>
<dbReference type="InterPro" id="IPR020835">
    <property type="entry name" value="Catalase_sf"/>
</dbReference>
<dbReference type="PANTHER" id="PTHR11465">
    <property type="entry name" value="CATALASE"/>
    <property type="match status" value="1"/>
</dbReference>
<dbReference type="PANTHER" id="PTHR11465:SF61">
    <property type="entry name" value="CATALASE"/>
    <property type="match status" value="1"/>
</dbReference>
<dbReference type="Pfam" id="PF00199">
    <property type="entry name" value="Catalase"/>
    <property type="match status" value="1"/>
</dbReference>
<dbReference type="Pfam" id="PF06628">
    <property type="entry name" value="Catalase-rel"/>
    <property type="match status" value="1"/>
</dbReference>
<dbReference type="PIRSF" id="PIRSF038928">
    <property type="entry name" value="Catalase_clade1-3"/>
    <property type="match status" value="1"/>
</dbReference>
<dbReference type="PRINTS" id="PR00067">
    <property type="entry name" value="CATALASE"/>
</dbReference>
<dbReference type="SMART" id="SM01060">
    <property type="entry name" value="Catalase"/>
    <property type="match status" value="1"/>
</dbReference>
<dbReference type="SUPFAM" id="SSF56634">
    <property type="entry name" value="Heme-dependent catalase-like"/>
    <property type="match status" value="1"/>
</dbReference>
<dbReference type="PROSITE" id="PS00437">
    <property type="entry name" value="CATALASE_1"/>
    <property type="match status" value="1"/>
</dbReference>
<dbReference type="PROSITE" id="PS00438">
    <property type="entry name" value="CATALASE_2"/>
    <property type="match status" value="1"/>
</dbReference>
<dbReference type="PROSITE" id="PS51402">
    <property type="entry name" value="CATALASE_3"/>
    <property type="match status" value="1"/>
</dbReference>
<keyword id="KW-0349">Heme</keyword>
<keyword id="KW-0376">Hydrogen peroxide</keyword>
<keyword id="KW-0408">Iron</keyword>
<keyword id="KW-0479">Metal-binding</keyword>
<keyword id="KW-0560">Oxidoreductase</keyword>
<keyword id="KW-0575">Peroxidase</keyword>
<accession>Q2PUJ9</accession>
<evidence type="ECO:0000250" key="1"/>
<evidence type="ECO:0000255" key="2">
    <source>
        <dbReference type="PROSITE-ProRule" id="PRU10013"/>
    </source>
</evidence>
<evidence type="ECO:0000305" key="3"/>
<feature type="chain" id="PRO_0000278275" description="Catalase">
    <location>
        <begin position="1"/>
        <end position="504"/>
    </location>
</feature>
<feature type="active site" evidence="2">
    <location>
        <position position="56"/>
    </location>
</feature>
<feature type="active site" evidence="2">
    <location>
        <position position="129"/>
    </location>
</feature>
<feature type="binding site" description="axial binding residue" evidence="1">
    <location>
        <position position="339"/>
    </location>
    <ligand>
        <name>heme</name>
        <dbReference type="ChEBI" id="CHEBI:30413"/>
    </ligand>
    <ligandPart>
        <name>Fe</name>
        <dbReference type="ChEBI" id="CHEBI:18248"/>
    </ligandPart>
</feature>
<proteinExistence type="inferred from homology"/>
<comment type="function">
    <text evidence="1">Decomposes hydrogen peroxide into water and oxygen; serves to protect cells from the toxic effects of hydrogen peroxide.</text>
</comment>
<comment type="catalytic activity">
    <reaction evidence="2">
        <text>2 H2O2 = O2 + 2 H2O</text>
        <dbReference type="Rhea" id="RHEA:20309"/>
        <dbReference type="ChEBI" id="CHEBI:15377"/>
        <dbReference type="ChEBI" id="CHEBI:15379"/>
        <dbReference type="ChEBI" id="CHEBI:16240"/>
        <dbReference type="EC" id="1.11.1.6"/>
    </reaction>
</comment>
<comment type="cofactor">
    <cofactor evidence="1">
        <name>heme</name>
        <dbReference type="ChEBI" id="CHEBI:30413"/>
    </cofactor>
</comment>
<comment type="subunit">
    <text evidence="1">Homodimer.</text>
</comment>
<comment type="similarity">
    <text evidence="3">Belongs to the catalase family.</text>
</comment>
<organism>
    <name type="scientific">Staphylococcus epidermidis</name>
    <dbReference type="NCBI Taxonomy" id="1282"/>
    <lineage>
        <taxon>Bacteria</taxon>
        <taxon>Bacillati</taxon>
        <taxon>Bacillota</taxon>
        <taxon>Bacilli</taxon>
        <taxon>Bacillales</taxon>
        <taxon>Staphylococcaceae</taxon>
        <taxon>Staphylococcus</taxon>
    </lineage>
</organism>
<sequence length="504" mass="58269">MSKQDGKLTGLFGAPVSDRENSMTAGRRGPLLMQDVYYLEQISHFDREVIPERRMHAKGSGAFGTFTVTNDITQYTNAKIFSEVGKQTEMFARFSTVSGERGAADLERDIRGFALKFYTEDGNWDLVGNNTPVFFFRDPKLFISLNRAVKRDPRTNMRSAQNNWDFWTGLPEALHQVTILMSDRGMPKGFRNMHGFGSHTYSMYNDKGERVWVKYHFRTQQGIENYTDEEAAKIVGMDRDSSQRDLYNAIENGDYPKWKMYIQVMTEEQAKNHPDNPFDLTKVWYKKDYPLIEVGEFELNRNPENYFLDVEQAAFAPTNIVPGLDYSPDKMLQGRLFSYGDAQRYRLGVNHWQIPVNQPKGVGVENLCPFSRDGQMRFLDNNQGGGPHYYPNNQGIYESQPEHKKPPFPTDGDGYEYNYRQDDDNYFEQPGKLFRLQSEDAKERIFTNTANAMDGVSKDVKVRHIRHCYKADPEYGKGVAKALDIDINQIDLETNQDETYENFK</sequence>